<organism>
    <name type="scientific">Bacillus anthracis (strain A0248)</name>
    <dbReference type="NCBI Taxonomy" id="592021"/>
    <lineage>
        <taxon>Bacteria</taxon>
        <taxon>Bacillati</taxon>
        <taxon>Bacillota</taxon>
        <taxon>Bacilli</taxon>
        <taxon>Bacillales</taxon>
        <taxon>Bacillaceae</taxon>
        <taxon>Bacillus</taxon>
        <taxon>Bacillus cereus group</taxon>
    </lineage>
</organism>
<feature type="chain" id="PRO_1000164724" description="Dihydroorotate dehydrogenase B (NAD(+)), electron transfer subunit">
    <location>
        <begin position="1"/>
        <end position="259"/>
    </location>
</feature>
<feature type="domain" description="FAD-binding FR-type" evidence="1">
    <location>
        <begin position="2"/>
        <end position="102"/>
    </location>
</feature>
<feature type="binding site" evidence="1">
    <location>
        <begin position="53"/>
        <end position="56"/>
    </location>
    <ligand>
        <name>FAD</name>
        <dbReference type="ChEBI" id="CHEBI:57692"/>
    </ligand>
</feature>
<feature type="binding site" evidence="1">
    <location>
        <begin position="70"/>
        <end position="72"/>
    </location>
    <ligand>
        <name>FAD</name>
        <dbReference type="ChEBI" id="CHEBI:57692"/>
    </ligand>
</feature>
<feature type="binding site" evidence="1">
    <location>
        <begin position="77"/>
        <end position="78"/>
    </location>
    <ligand>
        <name>FAD</name>
        <dbReference type="ChEBI" id="CHEBI:57692"/>
    </ligand>
</feature>
<feature type="binding site" evidence="1">
    <location>
        <position position="221"/>
    </location>
    <ligand>
        <name>[2Fe-2S] cluster</name>
        <dbReference type="ChEBI" id="CHEBI:190135"/>
    </ligand>
</feature>
<feature type="binding site" evidence="1">
    <location>
        <position position="226"/>
    </location>
    <ligand>
        <name>[2Fe-2S] cluster</name>
        <dbReference type="ChEBI" id="CHEBI:190135"/>
    </ligand>
</feature>
<feature type="binding site" evidence="1">
    <location>
        <position position="229"/>
    </location>
    <ligand>
        <name>[2Fe-2S] cluster</name>
        <dbReference type="ChEBI" id="CHEBI:190135"/>
    </ligand>
</feature>
<feature type="binding site" evidence="1">
    <location>
        <position position="246"/>
    </location>
    <ligand>
        <name>[2Fe-2S] cluster</name>
        <dbReference type="ChEBI" id="CHEBI:190135"/>
    </ligand>
</feature>
<gene>
    <name evidence="1" type="primary">pyrK</name>
    <name type="ordered locus">BAA_4047</name>
</gene>
<comment type="function">
    <text evidence="1">Responsible for channeling the electrons from the oxidation of dihydroorotate from the FMN redox center in the PyrD type B subunit to the ultimate electron acceptor NAD(+).</text>
</comment>
<comment type="cofactor">
    <cofactor evidence="1">
        <name>[2Fe-2S] cluster</name>
        <dbReference type="ChEBI" id="CHEBI:190135"/>
    </cofactor>
    <text evidence="1">Binds 1 [2Fe-2S] cluster per subunit.</text>
</comment>
<comment type="cofactor">
    <cofactor evidence="1">
        <name>FAD</name>
        <dbReference type="ChEBI" id="CHEBI:57692"/>
    </cofactor>
    <text evidence="1">Binds 1 FAD per subunit.</text>
</comment>
<comment type="pathway">
    <text evidence="1">Pyrimidine metabolism; UMP biosynthesis via de novo pathway; orotate from (S)-dihydroorotate (NAD(+) route): step 1/1.</text>
</comment>
<comment type="subunit">
    <text evidence="1">Heterotetramer of 2 PyrK and 2 PyrD type B subunits.</text>
</comment>
<comment type="similarity">
    <text evidence="1">Belongs to the PyrK family.</text>
</comment>
<reference key="1">
    <citation type="submission" date="2009-04" db="EMBL/GenBank/DDBJ databases">
        <title>Genome sequence of Bacillus anthracis A0248.</title>
        <authorList>
            <person name="Dodson R.J."/>
            <person name="Munk A.C."/>
            <person name="Bruce D."/>
            <person name="Detter C."/>
            <person name="Tapia R."/>
            <person name="Sutton G."/>
            <person name="Sims D."/>
            <person name="Brettin T."/>
        </authorList>
    </citation>
    <scope>NUCLEOTIDE SEQUENCE [LARGE SCALE GENOMIC DNA]</scope>
    <source>
        <strain>A0248</strain>
    </source>
</reference>
<protein>
    <recommendedName>
        <fullName evidence="1">Dihydroorotate dehydrogenase B (NAD(+)), electron transfer subunit</fullName>
    </recommendedName>
    <alternativeName>
        <fullName evidence="1">Dihydroorotate oxidase B, electron transfer subunit</fullName>
    </alternativeName>
</protein>
<sequence>MMQKQNMIVVNQKEIAKNIYELVLQGTLVQQMNEPGQFVHIKVAEGIAPLLRRPISICNVDQEKNEFTMLYRAEGQGTKTLATRKQGEMVDVLGPLGHGFPVEEAEAGQTALLVGGGIGVPPLYELSQRLVAKGVRVIHILGFQTKDVVFYEEKFAELGDTYVATVDGTHGTKGFVTDVIDHYGIDFDILYSCGPLAMLRALEGRYKEKKAYISLEERMGCGIGACFACVCHLQEDPSGHSYKKVCSDGPVFPIGEVVL</sequence>
<evidence type="ECO:0000255" key="1">
    <source>
        <dbReference type="HAMAP-Rule" id="MF_01211"/>
    </source>
</evidence>
<dbReference type="EMBL" id="CP001598">
    <property type="protein sequence ID" value="ACQ49913.1"/>
    <property type="molecule type" value="Genomic_DNA"/>
</dbReference>
<dbReference type="RefSeq" id="WP_000983358.1">
    <property type="nucleotide sequence ID" value="NC_012659.1"/>
</dbReference>
<dbReference type="SMR" id="C3P655"/>
<dbReference type="GeneID" id="75087022"/>
<dbReference type="KEGG" id="bai:BAA_4047"/>
<dbReference type="HOGENOM" id="CLU_003827_1_2_9"/>
<dbReference type="UniPathway" id="UPA00070">
    <property type="reaction ID" value="UER00945"/>
</dbReference>
<dbReference type="GO" id="GO:0051537">
    <property type="term" value="F:2 iron, 2 sulfur cluster binding"/>
    <property type="evidence" value="ECO:0007669"/>
    <property type="project" value="UniProtKB-KW"/>
</dbReference>
<dbReference type="GO" id="GO:0009055">
    <property type="term" value="F:electron transfer activity"/>
    <property type="evidence" value="ECO:0007669"/>
    <property type="project" value="UniProtKB-UniRule"/>
</dbReference>
<dbReference type="GO" id="GO:0050660">
    <property type="term" value="F:flavin adenine dinucleotide binding"/>
    <property type="evidence" value="ECO:0007669"/>
    <property type="project" value="InterPro"/>
</dbReference>
<dbReference type="GO" id="GO:0046872">
    <property type="term" value="F:metal ion binding"/>
    <property type="evidence" value="ECO:0007669"/>
    <property type="project" value="UniProtKB-KW"/>
</dbReference>
<dbReference type="GO" id="GO:0016491">
    <property type="term" value="F:oxidoreductase activity"/>
    <property type="evidence" value="ECO:0007669"/>
    <property type="project" value="InterPro"/>
</dbReference>
<dbReference type="GO" id="GO:0044205">
    <property type="term" value="P:'de novo' UMP biosynthetic process"/>
    <property type="evidence" value="ECO:0007669"/>
    <property type="project" value="UniProtKB-UniRule"/>
</dbReference>
<dbReference type="CDD" id="cd06218">
    <property type="entry name" value="DHOD_e_trans"/>
    <property type="match status" value="1"/>
</dbReference>
<dbReference type="FunFam" id="2.10.240.10:FF:000001">
    <property type="entry name" value="Dihydroorotate dehydrogenase B (NAD(+)), electron transfer subunit"/>
    <property type="match status" value="1"/>
</dbReference>
<dbReference type="FunFam" id="2.40.30.10:FF:000045">
    <property type="entry name" value="Dihydroorotate dehydrogenase B (NAD(+)), electron transfer subunit"/>
    <property type="match status" value="1"/>
</dbReference>
<dbReference type="FunFam" id="3.40.50.80:FF:000017">
    <property type="entry name" value="Dihydroorotate dehydrogenase B (NAD(+)), electron transfer subunit"/>
    <property type="match status" value="1"/>
</dbReference>
<dbReference type="Gene3D" id="2.10.240.10">
    <property type="entry name" value="Dihydroorotate dehydrogenase, electron transfer subunit"/>
    <property type="match status" value="1"/>
</dbReference>
<dbReference type="Gene3D" id="3.40.50.80">
    <property type="entry name" value="Nucleotide-binding domain of ferredoxin-NADP reductase (FNR) module"/>
    <property type="match status" value="1"/>
</dbReference>
<dbReference type="Gene3D" id="2.40.30.10">
    <property type="entry name" value="Translation factors"/>
    <property type="match status" value="1"/>
</dbReference>
<dbReference type="HAMAP" id="MF_01211">
    <property type="entry name" value="DHODB_Fe_S_bind"/>
    <property type="match status" value="1"/>
</dbReference>
<dbReference type="InterPro" id="IPR012165">
    <property type="entry name" value="Cyt_c3_hydrogenase_gsu"/>
</dbReference>
<dbReference type="InterPro" id="IPR037117">
    <property type="entry name" value="Dihydroorotate_DH_ele_sf"/>
</dbReference>
<dbReference type="InterPro" id="IPR019480">
    <property type="entry name" value="Dihydroorotate_DH_Fe-S-bd"/>
</dbReference>
<dbReference type="InterPro" id="IPR023455">
    <property type="entry name" value="Dihydroorotate_DHASE_ETsu"/>
</dbReference>
<dbReference type="InterPro" id="IPR017927">
    <property type="entry name" value="FAD-bd_FR_type"/>
</dbReference>
<dbReference type="InterPro" id="IPR039261">
    <property type="entry name" value="FNR_nucleotide-bd"/>
</dbReference>
<dbReference type="InterPro" id="IPR001433">
    <property type="entry name" value="OxRdtase_FAD/NAD-bd"/>
</dbReference>
<dbReference type="InterPro" id="IPR050353">
    <property type="entry name" value="PyrK_electron_transfer"/>
</dbReference>
<dbReference type="InterPro" id="IPR017938">
    <property type="entry name" value="Riboflavin_synthase-like_b-brl"/>
</dbReference>
<dbReference type="NCBIfam" id="NF000797">
    <property type="entry name" value="PRK00054.1-2"/>
    <property type="match status" value="1"/>
</dbReference>
<dbReference type="NCBIfam" id="NF000799">
    <property type="entry name" value="PRK00054.1-4"/>
    <property type="match status" value="1"/>
</dbReference>
<dbReference type="PANTHER" id="PTHR43513">
    <property type="entry name" value="DIHYDROOROTATE DEHYDROGENASE B (NAD(+)), ELECTRON TRANSFER SUBUNIT"/>
    <property type="match status" value="1"/>
</dbReference>
<dbReference type="PANTHER" id="PTHR43513:SF3">
    <property type="entry name" value="DIHYDROOROTATE DEHYDROGENASE B (NAD(+)), ELECTRON TRANSFER SUBUNIT-RELATED"/>
    <property type="match status" value="1"/>
</dbReference>
<dbReference type="Pfam" id="PF10418">
    <property type="entry name" value="DHODB_Fe-S_bind"/>
    <property type="match status" value="1"/>
</dbReference>
<dbReference type="Pfam" id="PF00175">
    <property type="entry name" value="NAD_binding_1"/>
    <property type="match status" value="1"/>
</dbReference>
<dbReference type="PIRSF" id="PIRSF006816">
    <property type="entry name" value="Cyc3_hyd_g"/>
    <property type="match status" value="1"/>
</dbReference>
<dbReference type="PRINTS" id="PR00409">
    <property type="entry name" value="PHDIOXRDTASE"/>
</dbReference>
<dbReference type="SUPFAM" id="SSF52343">
    <property type="entry name" value="Ferredoxin reductase-like, C-terminal NADP-linked domain"/>
    <property type="match status" value="1"/>
</dbReference>
<dbReference type="SUPFAM" id="SSF63380">
    <property type="entry name" value="Riboflavin synthase domain-like"/>
    <property type="match status" value="1"/>
</dbReference>
<dbReference type="PROSITE" id="PS51384">
    <property type="entry name" value="FAD_FR"/>
    <property type="match status" value="1"/>
</dbReference>
<name>PYRK_BACAA</name>
<proteinExistence type="inferred from homology"/>
<keyword id="KW-0001">2Fe-2S</keyword>
<keyword id="KW-0249">Electron transport</keyword>
<keyword id="KW-0274">FAD</keyword>
<keyword id="KW-0285">Flavoprotein</keyword>
<keyword id="KW-0408">Iron</keyword>
<keyword id="KW-0411">Iron-sulfur</keyword>
<keyword id="KW-0479">Metal-binding</keyword>
<keyword id="KW-0665">Pyrimidine biosynthesis</keyword>
<keyword id="KW-0813">Transport</keyword>
<accession>C3P655</accession>